<sequence>MLEELNAKDKYSFNKLQKRLRRNVGQAIADFNMIEEGDKIMVCLSGGKDSFAMLDILMSLKASAPIHFDLVAVNLDQKQPGFPEHVLPEYLATLGVDFKIVEEDTYSIVKDKVPEGKTTCALCSRLRRGILYRTAQELGCTKIALGHHRDDILETLFLNMFYGGKLKSMPPKLVSDDGKNVVIRPLAYCKEKDLVRYAEVKAFPIIPCNLCGSQENLQRQAIKQMMQDWDRRFPGRIETMFTAIQDVIPSHLLDHKLFDFKSINRDSGIIDGGDKAFDPPELPTAPLLNIDEMDVLDVIEVR</sequence>
<protein>
    <recommendedName>
        <fullName evidence="1">tRNA-cytidine(32) 2-sulfurtransferase</fullName>
        <ecNumber evidence="1">2.8.1.-</ecNumber>
    </recommendedName>
    <alternativeName>
        <fullName evidence="1">Two-thiocytidine biosynthesis protein A</fullName>
    </alternativeName>
    <alternativeName>
        <fullName evidence="1">tRNA 2-thiocytidine biosynthesis protein TtcA</fullName>
    </alternativeName>
</protein>
<name>TTCA_AERS4</name>
<organism>
    <name type="scientific">Aeromonas salmonicida (strain A449)</name>
    <dbReference type="NCBI Taxonomy" id="382245"/>
    <lineage>
        <taxon>Bacteria</taxon>
        <taxon>Pseudomonadati</taxon>
        <taxon>Pseudomonadota</taxon>
        <taxon>Gammaproteobacteria</taxon>
        <taxon>Aeromonadales</taxon>
        <taxon>Aeromonadaceae</taxon>
        <taxon>Aeromonas</taxon>
    </lineage>
</organism>
<accession>A4SMC4</accession>
<reference key="1">
    <citation type="journal article" date="2008" name="BMC Genomics">
        <title>The genome of Aeromonas salmonicida subsp. salmonicida A449: insights into the evolution of a fish pathogen.</title>
        <authorList>
            <person name="Reith M.E."/>
            <person name="Singh R.K."/>
            <person name="Curtis B."/>
            <person name="Boyd J.M."/>
            <person name="Bouevitch A."/>
            <person name="Kimball J."/>
            <person name="Munholland J."/>
            <person name="Murphy C."/>
            <person name="Sarty D."/>
            <person name="Williams J."/>
            <person name="Nash J.H."/>
            <person name="Johnson S.C."/>
            <person name="Brown L.L."/>
        </authorList>
    </citation>
    <scope>NUCLEOTIDE SEQUENCE [LARGE SCALE GENOMIC DNA]</scope>
    <source>
        <strain>A449</strain>
    </source>
</reference>
<keyword id="KW-0004">4Fe-4S</keyword>
<keyword id="KW-0067">ATP-binding</keyword>
<keyword id="KW-0963">Cytoplasm</keyword>
<keyword id="KW-0408">Iron</keyword>
<keyword id="KW-0411">Iron-sulfur</keyword>
<keyword id="KW-0460">Magnesium</keyword>
<keyword id="KW-0479">Metal-binding</keyword>
<keyword id="KW-0547">Nucleotide-binding</keyword>
<keyword id="KW-0694">RNA-binding</keyword>
<keyword id="KW-0808">Transferase</keyword>
<keyword id="KW-0819">tRNA processing</keyword>
<keyword id="KW-0820">tRNA-binding</keyword>
<evidence type="ECO:0000255" key="1">
    <source>
        <dbReference type="HAMAP-Rule" id="MF_01850"/>
    </source>
</evidence>
<proteinExistence type="inferred from homology"/>
<dbReference type="EC" id="2.8.1.-" evidence="1"/>
<dbReference type="EMBL" id="CP000644">
    <property type="protein sequence ID" value="ABO90046.1"/>
    <property type="molecule type" value="Genomic_DNA"/>
</dbReference>
<dbReference type="RefSeq" id="WP_005315582.1">
    <property type="nucleotide sequence ID" value="NC_009348.1"/>
</dbReference>
<dbReference type="SMR" id="A4SMC4"/>
<dbReference type="STRING" id="29491.GCA_000820065_03885"/>
<dbReference type="KEGG" id="asa:ASA_1975"/>
<dbReference type="eggNOG" id="COG0037">
    <property type="taxonomic scope" value="Bacteria"/>
</dbReference>
<dbReference type="HOGENOM" id="CLU_026481_0_0_6"/>
<dbReference type="Proteomes" id="UP000000225">
    <property type="component" value="Chromosome"/>
</dbReference>
<dbReference type="GO" id="GO:0005737">
    <property type="term" value="C:cytoplasm"/>
    <property type="evidence" value="ECO:0007669"/>
    <property type="project" value="UniProtKB-SubCell"/>
</dbReference>
<dbReference type="GO" id="GO:0051539">
    <property type="term" value="F:4 iron, 4 sulfur cluster binding"/>
    <property type="evidence" value="ECO:0007669"/>
    <property type="project" value="UniProtKB-UniRule"/>
</dbReference>
<dbReference type="GO" id="GO:0005524">
    <property type="term" value="F:ATP binding"/>
    <property type="evidence" value="ECO:0007669"/>
    <property type="project" value="UniProtKB-UniRule"/>
</dbReference>
<dbReference type="GO" id="GO:0000287">
    <property type="term" value="F:magnesium ion binding"/>
    <property type="evidence" value="ECO:0007669"/>
    <property type="project" value="UniProtKB-UniRule"/>
</dbReference>
<dbReference type="GO" id="GO:0016783">
    <property type="term" value="F:sulfurtransferase activity"/>
    <property type="evidence" value="ECO:0007669"/>
    <property type="project" value="UniProtKB-UniRule"/>
</dbReference>
<dbReference type="GO" id="GO:0000049">
    <property type="term" value="F:tRNA binding"/>
    <property type="evidence" value="ECO:0007669"/>
    <property type="project" value="UniProtKB-KW"/>
</dbReference>
<dbReference type="GO" id="GO:0034227">
    <property type="term" value="P:tRNA thio-modification"/>
    <property type="evidence" value="ECO:0007669"/>
    <property type="project" value="UniProtKB-UniRule"/>
</dbReference>
<dbReference type="CDD" id="cd24138">
    <property type="entry name" value="TtcA-like"/>
    <property type="match status" value="1"/>
</dbReference>
<dbReference type="Gene3D" id="3.40.50.620">
    <property type="entry name" value="HUPs"/>
    <property type="match status" value="1"/>
</dbReference>
<dbReference type="HAMAP" id="MF_01850">
    <property type="entry name" value="TtcA"/>
    <property type="match status" value="1"/>
</dbReference>
<dbReference type="InterPro" id="IPR014729">
    <property type="entry name" value="Rossmann-like_a/b/a_fold"/>
</dbReference>
<dbReference type="InterPro" id="IPR011063">
    <property type="entry name" value="TilS/TtcA_N"/>
</dbReference>
<dbReference type="InterPro" id="IPR012089">
    <property type="entry name" value="tRNA_Cyd_32_2_STrfase"/>
</dbReference>
<dbReference type="InterPro" id="IPR035107">
    <property type="entry name" value="tRNA_thiolation_TtcA_Ctu1"/>
</dbReference>
<dbReference type="NCBIfam" id="NF007972">
    <property type="entry name" value="PRK10696.1"/>
    <property type="match status" value="1"/>
</dbReference>
<dbReference type="PANTHER" id="PTHR43686:SF1">
    <property type="entry name" value="AMINOTRAN_5 DOMAIN-CONTAINING PROTEIN"/>
    <property type="match status" value="1"/>
</dbReference>
<dbReference type="PANTHER" id="PTHR43686">
    <property type="entry name" value="SULFURTRANSFERASE-RELATED"/>
    <property type="match status" value="1"/>
</dbReference>
<dbReference type="Pfam" id="PF01171">
    <property type="entry name" value="ATP_bind_3"/>
    <property type="match status" value="1"/>
</dbReference>
<dbReference type="PIRSF" id="PIRSF004976">
    <property type="entry name" value="ATPase_YdaO"/>
    <property type="match status" value="1"/>
</dbReference>
<dbReference type="SUPFAM" id="SSF52402">
    <property type="entry name" value="Adenine nucleotide alpha hydrolases-like"/>
    <property type="match status" value="1"/>
</dbReference>
<feature type="chain" id="PRO_0000348655" description="tRNA-cytidine(32) 2-sulfurtransferase">
    <location>
        <begin position="1"/>
        <end position="302"/>
    </location>
</feature>
<feature type="short sequence motif" description="PP-loop motif" evidence="1">
    <location>
        <begin position="45"/>
        <end position="50"/>
    </location>
</feature>
<feature type="binding site" evidence="1">
    <location>
        <position position="120"/>
    </location>
    <ligand>
        <name>[4Fe-4S] cluster</name>
        <dbReference type="ChEBI" id="CHEBI:49883"/>
    </ligand>
</feature>
<feature type="binding site" evidence="1">
    <location>
        <position position="123"/>
    </location>
    <ligand>
        <name>[4Fe-4S] cluster</name>
        <dbReference type="ChEBI" id="CHEBI:49883"/>
    </ligand>
</feature>
<feature type="binding site" evidence="1">
    <location>
        <position position="211"/>
    </location>
    <ligand>
        <name>[4Fe-4S] cluster</name>
        <dbReference type="ChEBI" id="CHEBI:49883"/>
    </ligand>
</feature>
<comment type="function">
    <text evidence="1">Catalyzes the ATP-dependent 2-thiolation of cytidine in position 32 of tRNA, to form 2-thiocytidine (s(2)C32). The sulfur atoms are provided by the cysteine/cysteine desulfurase (IscS) system.</text>
</comment>
<comment type="catalytic activity">
    <reaction evidence="1">
        <text>cytidine(32) in tRNA + S-sulfanyl-L-cysteinyl-[cysteine desulfurase] + AH2 + ATP = 2-thiocytidine(32) in tRNA + L-cysteinyl-[cysteine desulfurase] + A + AMP + diphosphate + H(+)</text>
        <dbReference type="Rhea" id="RHEA:57048"/>
        <dbReference type="Rhea" id="RHEA-COMP:10288"/>
        <dbReference type="Rhea" id="RHEA-COMP:12157"/>
        <dbReference type="Rhea" id="RHEA-COMP:12158"/>
        <dbReference type="Rhea" id="RHEA-COMP:14821"/>
        <dbReference type="ChEBI" id="CHEBI:13193"/>
        <dbReference type="ChEBI" id="CHEBI:15378"/>
        <dbReference type="ChEBI" id="CHEBI:17499"/>
        <dbReference type="ChEBI" id="CHEBI:29950"/>
        <dbReference type="ChEBI" id="CHEBI:30616"/>
        <dbReference type="ChEBI" id="CHEBI:33019"/>
        <dbReference type="ChEBI" id="CHEBI:61963"/>
        <dbReference type="ChEBI" id="CHEBI:82748"/>
        <dbReference type="ChEBI" id="CHEBI:141453"/>
        <dbReference type="ChEBI" id="CHEBI:456215"/>
    </reaction>
    <physiologicalReaction direction="left-to-right" evidence="1">
        <dbReference type="Rhea" id="RHEA:57049"/>
    </physiologicalReaction>
</comment>
<comment type="cofactor">
    <cofactor evidence="1">
        <name>Mg(2+)</name>
        <dbReference type="ChEBI" id="CHEBI:18420"/>
    </cofactor>
</comment>
<comment type="cofactor">
    <cofactor evidence="1">
        <name>[4Fe-4S] cluster</name>
        <dbReference type="ChEBI" id="CHEBI:49883"/>
    </cofactor>
    <text evidence="1">Binds 1 [4Fe-4S] cluster per subunit. The cluster is chelated by three Cys residues, the fourth Fe has a free coordination site that may bind a sulfur atom transferred from the persulfide of IscS.</text>
</comment>
<comment type="pathway">
    <text evidence="1">tRNA modification.</text>
</comment>
<comment type="subunit">
    <text evidence="1">Homodimer.</text>
</comment>
<comment type="subcellular location">
    <subcellularLocation>
        <location evidence="1">Cytoplasm</location>
    </subcellularLocation>
</comment>
<comment type="miscellaneous">
    <text evidence="1">The thiolation reaction likely consists of two steps: a first activation step by ATP to form an adenylated intermediate of the target base of tRNA, and a second nucleophilic substitution step of the sulfur (S) atom supplied by the hydrosulfide attached to the Fe-S cluster.</text>
</comment>
<comment type="similarity">
    <text evidence="1">Belongs to the TtcA family.</text>
</comment>
<gene>
    <name evidence="1" type="primary">ttcA</name>
    <name type="ordered locus">ASA_1975</name>
</gene>